<sequence length="484" mass="51762">MHQKTVAEISAALHAGEISSRELTDSLLKRIEQFDPRLNSLITVTAEQARAAADAADARLRAGEAGPLTGVPLVHKDIFCTDGVATTCGSRMLEPFRAPYDATVVRRLAEAGAVMLGKANMDEFAMGSSNETSYFGPVRNPWDLDAVPGGSSGGSAAAVAARLAPAATGTDTGGSIRQPAALSGICGLKPTYGRVSRYGMVAFASSLDQAGPFARTAEDLALLLGGMAGLDERDSTSVDHVVPDYSESLNRSIRGLRIGVPKEFFGEGLDADVRSRVEAALQVLEGEGAELVEVQLPNMELALPAYYVIAPAEASSNLARFDGVRFGHRCADPQDLEDLYKRSRAEGFGDEVQRRILVGTYALSAGYYDAYYRKAQQVRRLVADDFRQALDQVDVLAGPTSPTPAFDLGERADDPVQMYLSDIYTLGVNLAGLPGLSVPAGFSRGRPVGLQLIGGYFDEARLLNVGHKYQQVTDWHKQVPEGFE</sequence>
<dbReference type="EC" id="6.3.5.7" evidence="1"/>
<dbReference type="EMBL" id="CP000544">
    <property type="protein sequence ID" value="ABM61779.1"/>
    <property type="molecule type" value="Genomic_DNA"/>
</dbReference>
<dbReference type="RefSeq" id="WP_011813802.1">
    <property type="nucleotide sequence ID" value="NC_008789.1"/>
</dbReference>
<dbReference type="SMR" id="A1WVR7"/>
<dbReference type="STRING" id="349124.Hhal_1003"/>
<dbReference type="KEGG" id="hha:Hhal_1003"/>
<dbReference type="eggNOG" id="COG0154">
    <property type="taxonomic scope" value="Bacteria"/>
</dbReference>
<dbReference type="HOGENOM" id="CLU_009600_0_3_6"/>
<dbReference type="OrthoDB" id="9811471at2"/>
<dbReference type="Proteomes" id="UP000000647">
    <property type="component" value="Chromosome"/>
</dbReference>
<dbReference type="GO" id="GO:0030956">
    <property type="term" value="C:glutamyl-tRNA(Gln) amidotransferase complex"/>
    <property type="evidence" value="ECO:0007669"/>
    <property type="project" value="InterPro"/>
</dbReference>
<dbReference type="GO" id="GO:0005524">
    <property type="term" value="F:ATP binding"/>
    <property type="evidence" value="ECO:0007669"/>
    <property type="project" value="UniProtKB-KW"/>
</dbReference>
<dbReference type="GO" id="GO:0050567">
    <property type="term" value="F:glutaminyl-tRNA synthase (glutamine-hydrolyzing) activity"/>
    <property type="evidence" value="ECO:0007669"/>
    <property type="project" value="UniProtKB-UniRule"/>
</dbReference>
<dbReference type="GO" id="GO:0006412">
    <property type="term" value="P:translation"/>
    <property type="evidence" value="ECO:0007669"/>
    <property type="project" value="UniProtKB-UniRule"/>
</dbReference>
<dbReference type="Gene3D" id="3.90.1300.10">
    <property type="entry name" value="Amidase signature (AS) domain"/>
    <property type="match status" value="1"/>
</dbReference>
<dbReference type="HAMAP" id="MF_00120">
    <property type="entry name" value="GatA"/>
    <property type="match status" value="1"/>
</dbReference>
<dbReference type="InterPro" id="IPR000120">
    <property type="entry name" value="Amidase"/>
</dbReference>
<dbReference type="InterPro" id="IPR020556">
    <property type="entry name" value="Amidase_CS"/>
</dbReference>
<dbReference type="InterPro" id="IPR023631">
    <property type="entry name" value="Amidase_dom"/>
</dbReference>
<dbReference type="InterPro" id="IPR036928">
    <property type="entry name" value="AS_sf"/>
</dbReference>
<dbReference type="InterPro" id="IPR004412">
    <property type="entry name" value="GatA"/>
</dbReference>
<dbReference type="NCBIfam" id="TIGR00132">
    <property type="entry name" value="gatA"/>
    <property type="match status" value="1"/>
</dbReference>
<dbReference type="PANTHER" id="PTHR11895:SF151">
    <property type="entry name" value="GLUTAMYL-TRNA(GLN) AMIDOTRANSFERASE SUBUNIT A"/>
    <property type="match status" value="1"/>
</dbReference>
<dbReference type="PANTHER" id="PTHR11895">
    <property type="entry name" value="TRANSAMIDASE"/>
    <property type="match status" value="1"/>
</dbReference>
<dbReference type="Pfam" id="PF01425">
    <property type="entry name" value="Amidase"/>
    <property type="match status" value="1"/>
</dbReference>
<dbReference type="SUPFAM" id="SSF75304">
    <property type="entry name" value="Amidase signature (AS) enzymes"/>
    <property type="match status" value="1"/>
</dbReference>
<dbReference type="PROSITE" id="PS00571">
    <property type="entry name" value="AMIDASES"/>
    <property type="match status" value="1"/>
</dbReference>
<reference key="1">
    <citation type="submission" date="2006-12" db="EMBL/GenBank/DDBJ databases">
        <title>Complete sequence of Halorhodospira halophila SL1.</title>
        <authorList>
            <consortium name="US DOE Joint Genome Institute"/>
            <person name="Copeland A."/>
            <person name="Lucas S."/>
            <person name="Lapidus A."/>
            <person name="Barry K."/>
            <person name="Detter J.C."/>
            <person name="Glavina del Rio T."/>
            <person name="Hammon N."/>
            <person name="Israni S."/>
            <person name="Dalin E."/>
            <person name="Tice H."/>
            <person name="Pitluck S."/>
            <person name="Saunders E."/>
            <person name="Brettin T."/>
            <person name="Bruce D."/>
            <person name="Han C."/>
            <person name="Tapia R."/>
            <person name="Schmutz J."/>
            <person name="Larimer F."/>
            <person name="Land M."/>
            <person name="Hauser L."/>
            <person name="Kyrpides N."/>
            <person name="Mikhailova N."/>
            <person name="Hoff W."/>
            <person name="Richardson P."/>
        </authorList>
    </citation>
    <scope>NUCLEOTIDE SEQUENCE [LARGE SCALE GENOMIC DNA]</scope>
    <source>
        <strain>DSM 244 / SL1</strain>
    </source>
</reference>
<proteinExistence type="inferred from homology"/>
<gene>
    <name evidence="1" type="primary">gatA</name>
    <name type="ordered locus">Hhal_1003</name>
</gene>
<comment type="function">
    <text evidence="1">Allows the formation of correctly charged Gln-tRNA(Gln) through the transamidation of misacylated Glu-tRNA(Gln) in organisms which lack glutaminyl-tRNA synthetase. The reaction takes place in the presence of glutamine and ATP through an activated gamma-phospho-Glu-tRNA(Gln).</text>
</comment>
<comment type="catalytic activity">
    <reaction evidence="1">
        <text>L-glutamyl-tRNA(Gln) + L-glutamine + ATP + H2O = L-glutaminyl-tRNA(Gln) + L-glutamate + ADP + phosphate + H(+)</text>
        <dbReference type="Rhea" id="RHEA:17521"/>
        <dbReference type="Rhea" id="RHEA-COMP:9681"/>
        <dbReference type="Rhea" id="RHEA-COMP:9684"/>
        <dbReference type="ChEBI" id="CHEBI:15377"/>
        <dbReference type="ChEBI" id="CHEBI:15378"/>
        <dbReference type="ChEBI" id="CHEBI:29985"/>
        <dbReference type="ChEBI" id="CHEBI:30616"/>
        <dbReference type="ChEBI" id="CHEBI:43474"/>
        <dbReference type="ChEBI" id="CHEBI:58359"/>
        <dbReference type="ChEBI" id="CHEBI:78520"/>
        <dbReference type="ChEBI" id="CHEBI:78521"/>
        <dbReference type="ChEBI" id="CHEBI:456216"/>
        <dbReference type="EC" id="6.3.5.7"/>
    </reaction>
</comment>
<comment type="subunit">
    <text evidence="1">Heterotrimer of A, B and C subunits.</text>
</comment>
<comment type="similarity">
    <text evidence="1">Belongs to the amidase family. GatA subfamily.</text>
</comment>
<evidence type="ECO:0000255" key="1">
    <source>
        <dbReference type="HAMAP-Rule" id="MF_00120"/>
    </source>
</evidence>
<feature type="chain" id="PRO_1000015837" description="Glutamyl-tRNA(Gln) amidotransferase subunit A">
    <location>
        <begin position="1"/>
        <end position="484"/>
    </location>
</feature>
<feature type="active site" description="Charge relay system" evidence="1">
    <location>
        <position position="76"/>
    </location>
</feature>
<feature type="active site" description="Charge relay system" evidence="1">
    <location>
        <position position="151"/>
    </location>
</feature>
<feature type="active site" description="Acyl-ester intermediate" evidence="1">
    <location>
        <position position="175"/>
    </location>
</feature>
<accession>A1WVR7</accession>
<organism>
    <name type="scientific">Halorhodospira halophila (strain DSM 244 / SL1)</name>
    <name type="common">Ectothiorhodospira halophila (strain DSM 244 / SL1)</name>
    <dbReference type="NCBI Taxonomy" id="349124"/>
    <lineage>
        <taxon>Bacteria</taxon>
        <taxon>Pseudomonadati</taxon>
        <taxon>Pseudomonadota</taxon>
        <taxon>Gammaproteobacteria</taxon>
        <taxon>Chromatiales</taxon>
        <taxon>Ectothiorhodospiraceae</taxon>
        <taxon>Halorhodospira</taxon>
    </lineage>
</organism>
<keyword id="KW-0067">ATP-binding</keyword>
<keyword id="KW-0436">Ligase</keyword>
<keyword id="KW-0547">Nucleotide-binding</keyword>
<keyword id="KW-0648">Protein biosynthesis</keyword>
<keyword id="KW-1185">Reference proteome</keyword>
<name>GATA_HALHL</name>
<protein>
    <recommendedName>
        <fullName evidence="1">Glutamyl-tRNA(Gln) amidotransferase subunit A</fullName>
        <shortName evidence="1">Glu-ADT subunit A</shortName>
        <ecNumber evidence="1">6.3.5.7</ecNumber>
    </recommendedName>
</protein>